<reference key="1">
    <citation type="journal article" date="2007" name="Proc. Natl. Acad. Sci. U.S.A.">
        <title>Genome sequencing and comparative analysis of Saccharomyces cerevisiae strain YJM789.</title>
        <authorList>
            <person name="Wei W."/>
            <person name="McCusker J.H."/>
            <person name="Hyman R.W."/>
            <person name="Jones T."/>
            <person name="Ning Y."/>
            <person name="Cao Z."/>
            <person name="Gu Z."/>
            <person name="Bruno D."/>
            <person name="Miranda M."/>
            <person name="Nguyen M."/>
            <person name="Wilhelmy J."/>
            <person name="Komp C."/>
            <person name="Tamse R."/>
            <person name="Wang X."/>
            <person name="Jia P."/>
            <person name="Luedi P."/>
            <person name="Oefner P.J."/>
            <person name="David L."/>
            <person name="Dietrich F.S."/>
            <person name="Li Y."/>
            <person name="Davis R.W."/>
            <person name="Steinmetz L.M."/>
        </authorList>
    </citation>
    <scope>NUCLEOTIDE SEQUENCE [LARGE SCALE GENOMIC DNA]</scope>
    <source>
        <strain>YJM789</strain>
    </source>
</reference>
<organism>
    <name type="scientific">Saccharomyces cerevisiae (strain YJM789)</name>
    <name type="common">Baker's yeast</name>
    <dbReference type="NCBI Taxonomy" id="307796"/>
    <lineage>
        <taxon>Eukaryota</taxon>
        <taxon>Fungi</taxon>
        <taxon>Dikarya</taxon>
        <taxon>Ascomycota</taxon>
        <taxon>Saccharomycotina</taxon>
        <taxon>Saccharomycetes</taxon>
        <taxon>Saccharomycetales</taxon>
        <taxon>Saccharomycetaceae</taxon>
        <taxon>Saccharomyces</taxon>
    </lineage>
</organism>
<feature type="chain" id="PRO_0000404364" description="Regulator of rDNA transcription protein 5">
    <location>
        <begin position="1"/>
        <end position="289"/>
    </location>
</feature>
<feature type="domain" description="RRM" evidence="2">
    <location>
        <begin position="18"/>
        <end position="105"/>
    </location>
</feature>
<feature type="region of interest" description="Disordered" evidence="3">
    <location>
        <begin position="235"/>
        <end position="289"/>
    </location>
</feature>
<feature type="compositionally biased region" description="Pro residues" evidence="3">
    <location>
        <begin position="239"/>
        <end position="255"/>
    </location>
</feature>
<feature type="compositionally biased region" description="Polar residues" evidence="3">
    <location>
        <begin position="279"/>
        <end position="289"/>
    </location>
</feature>
<proteinExistence type="inferred from homology"/>
<name>RRT5_YEAS7</name>
<accession>A7A270</accession>
<keyword id="KW-0694">RNA-binding</keyword>
<keyword id="KW-0804">Transcription</keyword>
<keyword id="KW-0805">Transcription regulation</keyword>
<evidence type="ECO:0000250" key="1"/>
<evidence type="ECO:0000255" key="2">
    <source>
        <dbReference type="PROSITE-ProRule" id="PRU00176"/>
    </source>
</evidence>
<evidence type="ECO:0000256" key="3">
    <source>
        <dbReference type="SAM" id="MobiDB-lite"/>
    </source>
</evidence>
<evidence type="ECO:0000305" key="4"/>
<gene>
    <name type="primary">RRT5</name>
    <name type="ORF">SCY_1780</name>
</gene>
<protein>
    <recommendedName>
        <fullName>Regulator of rDNA transcription protein 5</fullName>
    </recommendedName>
</protein>
<dbReference type="EMBL" id="AAFW02000176">
    <property type="protein sequence ID" value="EDN59181.1"/>
    <property type="molecule type" value="Genomic_DNA"/>
</dbReference>
<dbReference type="HOGENOM" id="CLU_042558_0_0_1"/>
<dbReference type="Proteomes" id="UP000007060">
    <property type="component" value="Unassembled WGS sequence"/>
</dbReference>
<dbReference type="GO" id="GO:0005737">
    <property type="term" value="C:cytoplasm"/>
    <property type="evidence" value="ECO:0007669"/>
    <property type="project" value="TreeGrafter"/>
</dbReference>
<dbReference type="GO" id="GO:0005634">
    <property type="term" value="C:nucleus"/>
    <property type="evidence" value="ECO:0007669"/>
    <property type="project" value="TreeGrafter"/>
</dbReference>
<dbReference type="GO" id="GO:1990904">
    <property type="term" value="C:ribonucleoprotein complex"/>
    <property type="evidence" value="ECO:0007669"/>
    <property type="project" value="TreeGrafter"/>
</dbReference>
<dbReference type="GO" id="GO:0003729">
    <property type="term" value="F:mRNA binding"/>
    <property type="evidence" value="ECO:0007669"/>
    <property type="project" value="TreeGrafter"/>
</dbReference>
<dbReference type="CDD" id="cd12409">
    <property type="entry name" value="RRM1_RRT5"/>
    <property type="match status" value="1"/>
</dbReference>
<dbReference type="CDD" id="cd12410">
    <property type="entry name" value="RRM2_RRT5"/>
    <property type="match status" value="1"/>
</dbReference>
<dbReference type="FunFam" id="3.30.70.330:FF:000964">
    <property type="entry name" value="Regulator of rDNA transcription protein 5"/>
    <property type="match status" value="1"/>
</dbReference>
<dbReference type="Gene3D" id="3.30.70.330">
    <property type="match status" value="1"/>
</dbReference>
<dbReference type="InterPro" id="IPR012677">
    <property type="entry name" value="Nucleotide-bd_a/b_plait_sf"/>
</dbReference>
<dbReference type="InterPro" id="IPR035979">
    <property type="entry name" value="RBD_domain_sf"/>
</dbReference>
<dbReference type="InterPro" id="IPR000504">
    <property type="entry name" value="RRM_dom"/>
</dbReference>
<dbReference type="InterPro" id="IPR034244">
    <property type="entry name" value="Rrt5_RRM1"/>
</dbReference>
<dbReference type="InterPro" id="IPR034247">
    <property type="entry name" value="Rrt5_RRM2"/>
</dbReference>
<dbReference type="InterPro" id="IPR050374">
    <property type="entry name" value="RRT5_SRSF_SR"/>
</dbReference>
<dbReference type="PANTHER" id="PTHR23003:SF54">
    <property type="entry name" value="REGULATOR OF RDNA TRANSCRIPTION PROTEIN 5"/>
    <property type="match status" value="1"/>
</dbReference>
<dbReference type="PANTHER" id="PTHR23003">
    <property type="entry name" value="RNA RECOGNITION MOTIF RRM DOMAIN CONTAINING PROTEIN"/>
    <property type="match status" value="1"/>
</dbReference>
<dbReference type="Pfam" id="PF00076">
    <property type="entry name" value="RRM_1"/>
    <property type="match status" value="1"/>
</dbReference>
<dbReference type="SMART" id="SM00360">
    <property type="entry name" value="RRM"/>
    <property type="match status" value="1"/>
</dbReference>
<dbReference type="SUPFAM" id="SSF54928">
    <property type="entry name" value="RNA-binding domain, RBD"/>
    <property type="match status" value="1"/>
</dbReference>
<dbReference type="PROSITE" id="PS50102">
    <property type="entry name" value="RRM"/>
    <property type="match status" value="1"/>
</dbReference>
<comment type="function">
    <text evidence="1">May be involved in the modulation of rDNA transcription.</text>
</comment>
<comment type="similarity">
    <text evidence="4">Belongs to the RRT5 family.</text>
</comment>
<sequence>MTEQVNNDTTSDTTTTITTVYISNLPFTASERDLHAFLNNYGASSVLIPTQTVRRFSKRHNSNPRKPLGIAFAQFANNTLALKAIQDLNGTVFQNQKLFLKLHVPYEADSTPDTDVKKPKEKNKVKKTPETAADTVYCHDLPDDITDSEIRELFQLYSPQEIWIYRSKVYRRKCIPFAPHQITAALVTLQSETPIGDICDSVAKTATLRGKSIIVKPAYVSKIQEIKQLVKDNLTNARDPPPAALAEPAPAPAPVEPAEQVQEGQDNAETNDVPPPPASSSDRPTVAAT</sequence>